<reference key="1">
    <citation type="submission" date="2007-06" db="EMBL/GenBank/DDBJ databases">
        <title>Complete sequence of Sinorhizobium medicae WSM419 chromosome.</title>
        <authorList>
            <consortium name="US DOE Joint Genome Institute"/>
            <person name="Copeland A."/>
            <person name="Lucas S."/>
            <person name="Lapidus A."/>
            <person name="Barry K."/>
            <person name="Glavina del Rio T."/>
            <person name="Dalin E."/>
            <person name="Tice H."/>
            <person name="Pitluck S."/>
            <person name="Chain P."/>
            <person name="Malfatti S."/>
            <person name="Shin M."/>
            <person name="Vergez L."/>
            <person name="Schmutz J."/>
            <person name="Larimer F."/>
            <person name="Land M."/>
            <person name="Hauser L."/>
            <person name="Kyrpides N."/>
            <person name="Mikhailova N."/>
            <person name="Reeve W.G."/>
            <person name="Richardson P."/>
        </authorList>
    </citation>
    <scope>NUCLEOTIDE SEQUENCE [LARGE SCALE GENOMIC DNA]</scope>
    <source>
        <strain>WSM419</strain>
    </source>
</reference>
<dbReference type="EC" id="2.3.3.9" evidence="1"/>
<dbReference type="EMBL" id="CP000738">
    <property type="protein sequence ID" value="ABR62094.1"/>
    <property type="molecule type" value="Genomic_DNA"/>
</dbReference>
<dbReference type="RefSeq" id="WP_012067475.1">
    <property type="nucleotide sequence ID" value="NC_009636.1"/>
</dbReference>
<dbReference type="RefSeq" id="YP_001328929.1">
    <property type="nucleotide sequence ID" value="NC_009636.1"/>
</dbReference>
<dbReference type="SMR" id="A6UEL4"/>
<dbReference type="STRING" id="366394.Smed_3270"/>
<dbReference type="KEGG" id="smd:Smed_3270"/>
<dbReference type="PATRIC" id="fig|366394.8.peg.6511"/>
<dbReference type="eggNOG" id="COG2225">
    <property type="taxonomic scope" value="Bacteria"/>
</dbReference>
<dbReference type="HOGENOM" id="CLU_028446_1_0_5"/>
<dbReference type="OrthoDB" id="9762054at2"/>
<dbReference type="UniPathway" id="UPA00703">
    <property type="reaction ID" value="UER00720"/>
</dbReference>
<dbReference type="Proteomes" id="UP000001108">
    <property type="component" value="Chromosome"/>
</dbReference>
<dbReference type="GO" id="GO:0005829">
    <property type="term" value="C:cytosol"/>
    <property type="evidence" value="ECO:0007669"/>
    <property type="project" value="TreeGrafter"/>
</dbReference>
<dbReference type="GO" id="GO:0000287">
    <property type="term" value="F:magnesium ion binding"/>
    <property type="evidence" value="ECO:0007669"/>
    <property type="project" value="TreeGrafter"/>
</dbReference>
<dbReference type="GO" id="GO:0004474">
    <property type="term" value="F:malate synthase activity"/>
    <property type="evidence" value="ECO:0007669"/>
    <property type="project" value="UniProtKB-UniRule"/>
</dbReference>
<dbReference type="GO" id="GO:0009436">
    <property type="term" value="P:glyoxylate catabolic process"/>
    <property type="evidence" value="ECO:0007669"/>
    <property type="project" value="TreeGrafter"/>
</dbReference>
<dbReference type="GO" id="GO:0006097">
    <property type="term" value="P:glyoxylate cycle"/>
    <property type="evidence" value="ECO:0007669"/>
    <property type="project" value="UniProtKB-UniRule"/>
</dbReference>
<dbReference type="GO" id="GO:0006099">
    <property type="term" value="P:tricarboxylic acid cycle"/>
    <property type="evidence" value="ECO:0007669"/>
    <property type="project" value="UniProtKB-KW"/>
</dbReference>
<dbReference type="CDD" id="cd00728">
    <property type="entry name" value="malate_synt_G"/>
    <property type="match status" value="1"/>
</dbReference>
<dbReference type="FunFam" id="3.20.20.360:FF:000002">
    <property type="entry name" value="Malate synthase G"/>
    <property type="match status" value="1"/>
</dbReference>
<dbReference type="Gene3D" id="3.20.20.360">
    <property type="entry name" value="Malate synthase, domain 3"/>
    <property type="match status" value="2"/>
</dbReference>
<dbReference type="Gene3D" id="1.20.1220.12">
    <property type="entry name" value="Malate synthase, domain III"/>
    <property type="match status" value="1"/>
</dbReference>
<dbReference type="HAMAP" id="MF_00641">
    <property type="entry name" value="Malate_synth_G"/>
    <property type="match status" value="1"/>
</dbReference>
<dbReference type="InterPro" id="IPR044856">
    <property type="entry name" value="Malate_synth_C_sf"/>
</dbReference>
<dbReference type="InterPro" id="IPR011076">
    <property type="entry name" value="Malate_synth_sf"/>
</dbReference>
<dbReference type="InterPro" id="IPR001465">
    <property type="entry name" value="Malate_synthase_TIM"/>
</dbReference>
<dbReference type="InterPro" id="IPR006253">
    <property type="entry name" value="Malate_synthG"/>
</dbReference>
<dbReference type="InterPro" id="IPR048355">
    <property type="entry name" value="MS_C"/>
</dbReference>
<dbReference type="InterPro" id="IPR048356">
    <property type="entry name" value="MS_N"/>
</dbReference>
<dbReference type="InterPro" id="IPR046363">
    <property type="entry name" value="MS_N_TIM-barrel_dom"/>
</dbReference>
<dbReference type="InterPro" id="IPR048357">
    <property type="entry name" value="MSG_insertion"/>
</dbReference>
<dbReference type="NCBIfam" id="TIGR01345">
    <property type="entry name" value="malate_syn_G"/>
    <property type="match status" value="1"/>
</dbReference>
<dbReference type="NCBIfam" id="NF002825">
    <property type="entry name" value="PRK02999.1"/>
    <property type="match status" value="1"/>
</dbReference>
<dbReference type="PANTHER" id="PTHR42739">
    <property type="entry name" value="MALATE SYNTHASE G"/>
    <property type="match status" value="1"/>
</dbReference>
<dbReference type="PANTHER" id="PTHR42739:SF1">
    <property type="entry name" value="MALATE SYNTHASE G"/>
    <property type="match status" value="1"/>
</dbReference>
<dbReference type="Pfam" id="PF20659">
    <property type="entry name" value="MS_C"/>
    <property type="match status" value="1"/>
</dbReference>
<dbReference type="Pfam" id="PF20656">
    <property type="entry name" value="MS_N"/>
    <property type="match status" value="1"/>
</dbReference>
<dbReference type="Pfam" id="PF01274">
    <property type="entry name" value="MS_TIM-barrel"/>
    <property type="match status" value="1"/>
</dbReference>
<dbReference type="Pfam" id="PF20658">
    <property type="entry name" value="MSG_insertion"/>
    <property type="match status" value="1"/>
</dbReference>
<dbReference type="SUPFAM" id="SSF51645">
    <property type="entry name" value="Malate synthase G"/>
    <property type="match status" value="1"/>
</dbReference>
<keyword id="KW-0963">Cytoplasm</keyword>
<keyword id="KW-0329">Glyoxylate bypass</keyword>
<keyword id="KW-0460">Magnesium</keyword>
<keyword id="KW-0479">Metal-binding</keyword>
<keyword id="KW-0558">Oxidation</keyword>
<keyword id="KW-0808">Transferase</keyword>
<keyword id="KW-0816">Tricarboxylic acid cycle</keyword>
<organism>
    <name type="scientific">Sinorhizobium medicae (strain WSM419)</name>
    <name type="common">Ensifer medicae</name>
    <dbReference type="NCBI Taxonomy" id="366394"/>
    <lineage>
        <taxon>Bacteria</taxon>
        <taxon>Pseudomonadati</taxon>
        <taxon>Pseudomonadota</taxon>
        <taxon>Alphaproteobacteria</taxon>
        <taxon>Hyphomicrobiales</taxon>
        <taxon>Rhizobiaceae</taxon>
        <taxon>Sinorhizobium/Ensifer group</taxon>
        <taxon>Sinorhizobium</taxon>
    </lineage>
</organism>
<accession>A6UEL4</accession>
<gene>
    <name evidence="1" type="primary">glcB</name>
    <name type="ordered locus">Smed_3270</name>
</gene>
<name>MASZ_SINMW</name>
<feature type="chain" id="PRO_1000056926" description="Malate synthase G">
    <location>
        <begin position="1"/>
        <end position="724"/>
    </location>
</feature>
<feature type="active site" description="Proton acceptor" evidence="1">
    <location>
        <position position="338"/>
    </location>
</feature>
<feature type="active site" description="Proton donor" evidence="1">
    <location>
        <position position="629"/>
    </location>
</feature>
<feature type="binding site" evidence="1">
    <location>
        <position position="116"/>
    </location>
    <ligand>
        <name>acetyl-CoA</name>
        <dbReference type="ChEBI" id="CHEBI:57288"/>
    </ligand>
</feature>
<feature type="binding site" evidence="1">
    <location>
        <begin position="123"/>
        <end position="124"/>
    </location>
    <ligand>
        <name>acetyl-CoA</name>
        <dbReference type="ChEBI" id="CHEBI:57288"/>
    </ligand>
</feature>
<feature type="binding site" evidence="1">
    <location>
        <position position="274"/>
    </location>
    <ligand>
        <name>acetyl-CoA</name>
        <dbReference type="ChEBI" id="CHEBI:57288"/>
    </ligand>
</feature>
<feature type="binding site" evidence="1">
    <location>
        <position position="311"/>
    </location>
    <ligand>
        <name>acetyl-CoA</name>
        <dbReference type="ChEBI" id="CHEBI:57288"/>
    </ligand>
</feature>
<feature type="binding site" evidence="1">
    <location>
        <position position="338"/>
    </location>
    <ligand>
        <name>glyoxylate</name>
        <dbReference type="ChEBI" id="CHEBI:36655"/>
    </ligand>
</feature>
<feature type="binding site" evidence="1">
    <location>
        <position position="430"/>
    </location>
    <ligand>
        <name>glyoxylate</name>
        <dbReference type="ChEBI" id="CHEBI:36655"/>
    </ligand>
</feature>
<feature type="binding site" evidence="1">
    <location>
        <position position="430"/>
    </location>
    <ligand>
        <name>Mg(2+)</name>
        <dbReference type="ChEBI" id="CHEBI:18420"/>
    </ligand>
</feature>
<feature type="binding site" evidence="1">
    <location>
        <begin position="455"/>
        <end position="458"/>
    </location>
    <ligand>
        <name>glyoxylate</name>
        <dbReference type="ChEBI" id="CHEBI:36655"/>
    </ligand>
</feature>
<feature type="binding site" evidence="1">
    <location>
        <position position="458"/>
    </location>
    <ligand>
        <name>Mg(2+)</name>
        <dbReference type="ChEBI" id="CHEBI:18420"/>
    </ligand>
</feature>
<feature type="binding site" evidence="1">
    <location>
        <position position="539"/>
    </location>
    <ligand>
        <name>acetyl-CoA</name>
        <dbReference type="ChEBI" id="CHEBI:57288"/>
    </ligand>
</feature>
<feature type="modified residue" description="Cysteine sulfenic acid (-SOH)" evidence="1">
    <location>
        <position position="615"/>
    </location>
</feature>
<proteinExistence type="inferred from homology"/>
<comment type="function">
    <text evidence="1">Involved in the glycolate utilization. Catalyzes the condensation and subsequent hydrolysis of acetyl-coenzyme A (acetyl-CoA) and glyoxylate to form malate and CoA.</text>
</comment>
<comment type="catalytic activity">
    <reaction evidence="1">
        <text>glyoxylate + acetyl-CoA + H2O = (S)-malate + CoA + H(+)</text>
        <dbReference type="Rhea" id="RHEA:18181"/>
        <dbReference type="ChEBI" id="CHEBI:15377"/>
        <dbReference type="ChEBI" id="CHEBI:15378"/>
        <dbReference type="ChEBI" id="CHEBI:15589"/>
        <dbReference type="ChEBI" id="CHEBI:36655"/>
        <dbReference type="ChEBI" id="CHEBI:57287"/>
        <dbReference type="ChEBI" id="CHEBI:57288"/>
        <dbReference type="EC" id="2.3.3.9"/>
    </reaction>
</comment>
<comment type="cofactor">
    <cofactor evidence="1">
        <name>Mg(2+)</name>
        <dbReference type="ChEBI" id="CHEBI:18420"/>
    </cofactor>
</comment>
<comment type="pathway">
    <text evidence="1">Carbohydrate metabolism; glyoxylate cycle; (S)-malate from isocitrate: step 2/2.</text>
</comment>
<comment type="subunit">
    <text evidence="1">Monomer.</text>
</comment>
<comment type="subcellular location">
    <subcellularLocation>
        <location evidence="1">Cytoplasm</location>
    </subcellularLocation>
</comment>
<comment type="similarity">
    <text evidence="1">Belongs to the malate synthase family. GlcB subfamily.</text>
</comment>
<sequence length="724" mass="78836">MNRVEQDGLKIDAGLHRFLVEEAMPGTGVDPERFFSAFSDLIHDLGPKNRALLVKRDELQAKLDGWYRDHGAPVDMDAYEAFLKEIGYLLPEGSDFSVSTANVDPEIATIAGPQLVVPVMNARYALNAANARWGSLYDALYGTDAIPDAEGAERGKGYNPKRGGRVIAWARDFLDASAPLSSGRWIDATSLAIEGAALTVTLANGAKTALAMPAQFAGYSGNAAAPSEIVLRKNGLHVAIVLDPTTPIGKADAAGIADIILESAITTIMDCEDSVAAVDAEDKVLVYRNWLGLMKGDLEEQVAKGTTTFIRRLNPDRIYTASGGDKLTLPGRSLMLVRNVGHLMTNPAILDREGKEVPEGLMDAMVTALIALHDIGRNGRRANSRSGSMYVVKPKMHGPEEVAFACETFTRVEAALGLPANAMKMGIMDEERRTTVNLKECIRAARERVVFINTGFLDRTGDEIHTSMEAGAMIRKGDMKQAAWISAYENWNVDVGLECGLSGHAQIGKGMWAMPDLMAAMLEQKIAHPKAGANTAWVPSPTAATLHATHYHRINVSEIQNGLRSRSRAKLADILSVPVAARPNWTEEEIQRELDNNAQGILGYVVRWVDHGIGCSKVPDINNVGLMEDRATLRISAQHMANWLHHGIVSEAQIVETMKRMAAVVDAQNAGDPNYQPMASRFDESIAFQAALDLVLKGREQPNGYTEPVLHRRRLELKTKQRAA</sequence>
<evidence type="ECO:0000255" key="1">
    <source>
        <dbReference type="HAMAP-Rule" id="MF_00641"/>
    </source>
</evidence>
<protein>
    <recommendedName>
        <fullName evidence="1">Malate synthase G</fullName>
        <ecNumber evidence="1">2.3.3.9</ecNumber>
    </recommendedName>
</protein>